<accession>P0DOG3</accession>
<evidence type="ECO:0000269" key="1">
    <source>
    </source>
</evidence>
<gene>
    <name type="primary">PB2</name>
</gene>
<comment type="function">
    <text evidence="1">May participate in the inhibition of type I interferon induction through inhibition of the host mitochondrial antiviral signaling protein MAVS. The knockout of PB2-S1 has no detectable effects on laboratory infected mice.</text>
</comment>
<comment type="subcellular location">
    <subcellularLocation>
        <location evidence="1">Host mitochondrion</location>
    </subcellularLocation>
    <subcellularLocation>
        <location evidence="1">Host cytoplasm</location>
        <location evidence="1">Host cytosol</location>
    </subcellularLocation>
</comment>
<comment type="alternative products">
    <event type="alternative splicing"/>
    <isoform>
        <id>P0DOG3-1</id>
        <name>PB2-S1</name>
        <sequence type="displayed"/>
    </isoform>
    <isoform>
        <id>P03427-1</id>
        <name>Polymerase basic protein 2</name>
        <sequence type="external"/>
    </isoform>
</comment>
<sequence>MERIKELRNLMSQSRTREILTKTTVDHMAIIKKYTSGRQEKNPALRMKWMMAMKYPITADKRITEMIPERNEQGQTLWSKMNDAGSDRVMVSPLAVTWWNRNGPVTSTVHYPKIYKTYFEKVERLKHGTFGPVHFRNQVKIRRRVDINPGHADLSAKEAQDVIMEVVFPNEVGARILTSESQLTTTKEKKEELQGCKISPLMVAYMLERELVRKTRFLPVAGGTSSVYIEVLHLTQGTCWEQMYTPGGEARNDDVDQSLIIAARNIVRRATVSADPLASLLEMCHSTQIGGIRMVNILRQNPTEEQAVDICKAAMGLRISSSFSFGGFTFKRTSGSSVKREEEVLTGNLQTLKIRVHEGYEEFTMVGRRATAILRKATRRLIQLIVSGRDEQSIAEAIIVAMVFSQEDCMIKAVRGDLNFVNRANQRLNPMHQLLRHFQKDAKALFQNWGIESIDNVMGMIGILPDMTPSTEMSMRGVRISKMGVDEYSSAEKIVPLHQSKVECSSPH</sequence>
<name>PB2S1_I33A0</name>
<protein>
    <recommendedName>
        <fullName>PB2-S1</fullName>
    </recommendedName>
</protein>
<proteinExistence type="evidence at protein level"/>
<dbReference type="EMBL" id="J02179">
    <property type="status" value="NOT_ANNOTATED_CDS"/>
    <property type="molecule type" value="Genomic_RNA"/>
</dbReference>
<dbReference type="SMR" id="P0DOG3"/>
<dbReference type="Proteomes" id="UP000000834">
    <property type="component" value="Genome"/>
</dbReference>
<dbReference type="GO" id="GO:0044164">
    <property type="term" value="C:host cell cytosol"/>
    <property type="evidence" value="ECO:0007669"/>
    <property type="project" value="UniProtKB-SubCell"/>
</dbReference>
<dbReference type="GO" id="GO:0033650">
    <property type="term" value="C:host cell mitochondrion"/>
    <property type="evidence" value="ECO:0007669"/>
    <property type="project" value="UniProtKB-SubCell"/>
</dbReference>
<dbReference type="InterPro" id="IPR049110">
    <property type="entry name" value="Flu_PB2_2nd"/>
</dbReference>
<dbReference type="InterPro" id="IPR048298">
    <property type="entry name" value="Flu_PB2_CAP-bd"/>
</dbReference>
<dbReference type="InterPro" id="IPR049111">
    <property type="entry name" value="Flu_PB2_middle"/>
</dbReference>
<dbReference type="InterPro" id="IPR049106">
    <property type="entry name" value="Flu_PB2_N"/>
</dbReference>
<dbReference type="InterPro" id="IPR049113">
    <property type="entry name" value="PB2_helical"/>
</dbReference>
<dbReference type="Pfam" id="PF20947">
    <property type="entry name" value="Flu_PB2_1st"/>
    <property type="match status" value="1"/>
</dbReference>
<dbReference type="Pfam" id="PF20948">
    <property type="entry name" value="Flu_PB2_2nd"/>
    <property type="match status" value="1"/>
</dbReference>
<dbReference type="Pfam" id="PF20949">
    <property type="entry name" value="Flu_PB2_3rd"/>
    <property type="match status" value="1"/>
</dbReference>
<dbReference type="Pfam" id="PF20950">
    <property type="entry name" value="Flu_PB2_4th"/>
    <property type="match status" value="1"/>
</dbReference>
<dbReference type="Pfam" id="PF00604">
    <property type="entry name" value="Flu_PB2_5th"/>
    <property type="match status" value="1"/>
</dbReference>
<feature type="chain" id="PRO_0000440601" description="PB2-S1">
    <location>
        <begin position="1"/>
        <end position="508"/>
    </location>
</feature>
<keyword id="KW-0025">Alternative splicing</keyword>
<keyword id="KW-1035">Host cytoplasm</keyword>
<keyword id="KW-1045">Host mitochondrion</keyword>
<organism>
    <name type="scientific">Influenza A virus (strain A/Wilson-Smith/1933 H1N1)</name>
    <name type="common">Influenza A virus (strain A/WS/1933 H1N1)</name>
    <dbReference type="NCBI Taxonomy" id="381518"/>
    <lineage>
        <taxon>Viruses</taxon>
        <taxon>Riboviria</taxon>
        <taxon>Orthornavirae</taxon>
        <taxon>Negarnaviricota</taxon>
        <taxon>Polyploviricotina</taxon>
        <taxon>Insthoviricetes</taxon>
        <taxon>Articulavirales</taxon>
        <taxon>Orthomyxoviridae</taxon>
        <taxon>Alphainfluenzavirus</taxon>
        <taxon>Alphainfluenzavirus influenzae</taxon>
        <taxon>Influenza A virus</taxon>
    </lineage>
</organism>
<reference key="1">
    <citation type="journal article" date="1982" name="J. Virol.">
        <title>Complete nucleotide sequence of the polymerase 3 gene of human influenza virus A/WSN/33.</title>
        <authorList>
            <person name="Kaptein J.S."/>
            <person name="Nayak D.P."/>
        </authorList>
    </citation>
    <scope>NUCLEOTIDE SEQUENCE [GENOMIC RNA]</scope>
</reference>
<reference key="2">
    <citation type="journal article" date="2015" name="J. Virol.">
        <title>Identification of a novel viral protein expressed from the PB2 segment of Influenza A virus.</title>
        <authorList>
            <person name="Yamayoshi S."/>
            <person name="Watanabe M."/>
            <person name="Goto H."/>
            <person name="Kawaoka Y."/>
        </authorList>
    </citation>
    <scope>CHARACTERIZATION</scope>
    <scope>SUBCELLULAR LOCATION</scope>
    <scope>ALTERNATIVE SPLICING</scope>
</reference>
<organismHost>
    <name type="scientific">Aves</name>
    <dbReference type="NCBI Taxonomy" id="8782"/>
</organismHost>
<organismHost>
    <name type="scientific">Homo sapiens</name>
    <name type="common">Human</name>
    <dbReference type="NCBI Taxonomy" id="9606"/>
</organismHost>
<organismHost>
    <name type="scientific">Sus scrofa</name>
    <name type="common">Pig</name>
    <dbReference type="NCBI Taxonomy" id="9823"/>
</organismHost>